<gene>
    <name evidence="1" type="primary">dnaE2</name>
    <name type="ordered locus">MAP_3476c</name>
</gene>
<protein>
    <recommendedName>
        <fullName evidence="1">Error-prone DNA polymerase</fullName>
        <ecNumber evidence="1">2.7.7.7</ecNumber>
    </recommendedName>
</protein>
<proteinExistence type="inferred from homology"/>
<dbReference type="EC" id="2.7.7.7" evidence="1"/>
<dbReference type="EMBL" id="AE016958">
    <property type="protein sequence ID" value="AAS06026.1"/>
    <property type="molecule type" value="Genomic_DNA"/>
</dbReference>
<dbReference type="RefSeq" id="WP_003879017.1">
    <property type="nucleotide sequence ID" value="NZ_CP106873.1"/>
</dbReference>
<dbReference type="SMR" id="Q73U92"/>
<dbReference type="STRING" id="262316.MAP_3476c"/>
<dbReference type="KEGG" id="mpa:MAP_3476c"/>
<dbReference type="PATRIC" id="fig|262316.17.peg.3697"/>
<dbReference type="eggNOG" id="COG0587">
    <property type="taxonomic scope" value="Bacteria"/>
</dbReference>
<dbReference type="HOGENOM" id="CLU_001600_4_0_11"/>
<dbReference type="Proteomes" id="UP000000580">
    <property type="component" value="Chromosome"/>
</dbReference>
<dbReference type="GO" id="GO:0005737">
    <property type="term" value="C:cytoplasm"/>
    <property type="evidence" value="ECO:0007669"/>
    <property type="project" value="UniProtKB-SubCell"/>
</dbReference>
<dbReference type="GO" id="GO:0008408">
    <property type="term" value="F:3'-5' exonuclease activity"/>
    <property type="evidence" value="ECO:0007669"/>
    <property type="project" value="InterPro"/>
</dbReference>
<dbReference type="GO" id="GO:0003887">
    <property type="term" value="F:DNA-directed DNA polymerase activity"/>
    <property type="evidence" value="ECO:0007669"/>
    <property type="project" value="UniProtKB-UniRule"/>
</dbReference>
<dbReference type="GO" id="GO:0003676">
    <property type="term" value="F:nucleic acid binding"/>
    <property type="evidence" value="ECO:0007669"/>
    <property type="project" value="InterPro"/>
</dbReference>
<dbReference type="GO" id="GO:0006281">
    <property type="term" value="P:DNA repair"/>
    <property type="evidence" value="ECO:0007669"/>
    <property type="project" value="UniProtKB-UniRule"/>
</dbReference>
<dbReference type="GO" id="GO:0006260">
    <property type="term" value="P:DNA replication"/>
    <property type="evidence" value="ECO:0007669"/>
    <property type="project" value="UniProtKB-KW"/>
</dbReference>
<dbReference type="CDD" id="cd04485">
    <property type="entry name" value="DnaE_OBF"/>
    <property type="match status" value="1"/>
</dbReference>
<dbReference type="FunFam" id="1.10.150.870:FF:000002">
    <property type="entry name" value="Error-prone DNA polymerase"/>
    <property type="match status" value="1"/>
</dbReference>
<dbReference type="Gene3D" id="1.10.150.870">
    <property type="match status" value="1"/>
</dbReference>
<dbReference type="Gene3D" id="3.20.20.140">
    <property type="entry name" value="Metal-dependent hydrolases"/>
    <property type="match status" value="1"/>
</dbReference>
<dbReference type="HAMAP" id="MF_01902">
    <property type="entry name" value="DNApol_error_prone"/>
    <property type="match status" value="1"/>
</dbReference>
<dbReference type="InterPro" id="IPR011708">
    <property type="entry name" value="DNA_pol3_alpha_NTPase_dom"/>
</dbReference>
<dbReference type="InterPro" id="IPR040982">
    <property type="entry name" value="DNA_pol3_finger"/>
</dbReference>
<dbReference type="InterPro" id="IPR023073">
    <property type="entry name" value="DnaE2"/>
</dbReference>
<dbReference type="InterPro" id="IPR004805">
    <property type="entry name" value="DnaE2/DnaE/PolC"/>
</dbReference>
<dbReference type="InterPro" id="IPR029460">
    <property type="entry name" value="DNAPol_HHH"/>
</dbReference>
<dbReference type="InterPro" id="IPR004365">
    <property type="entry name" value="NA-bd_OB_tRNA"/>
</dbReference>
<dbReference type="InterPro" id="IPR004013">
    <property type="entry name" value="PHP_dom"/>
</dbReference>
<dbReference type="InterPro" id="IPR003141">
    <property type="entry name" value="Pol/His_phosphatase_N"/>
</dbReference>
<dbReference type="InterPro" id="IPR016195">
    <property type="entry name" value="Pol/histidinol_Pase-like"/>
</dbReference>
<dbReference type="NCBIfam" id="TIGR00594">
    <property type="entry name" value="polc"/>
    <property type="match status" value="1"/>
</dbReference>
<dbReference type="NCBIfam" id="NF004225">
    <property type="entry name" value="PRK05672.1"/>
    <property type="match status" value="1"/>
</dbReference>
<dbReference type="PANTHER" id="PTHR32294">
    <property type="entry name" value="DNA POLYMERASE III SUBUNIT ALPHA"/>
    <property type="match status" value="1"/>
</dbReference>
<dbReference type="PANTHER" id="PTHR32294:SF4">
    <property type="entry name" value="ERROR-PRONE DNA POLYMERASE"/>
    <property type="match status" value="1"/>
</dbReference>
<dbReference type="Pfam" id="PF07733">
    <property type="entry name" value="DNA_pol3_alpha"/>
    <property type="match status" value="1"/>
</dbReference>
<dbReference type="Pfam" id="PF17657">
    <property type="entry name" value="DNA_pol3_finger"/>
    <property type="match status" value="1"/>
</dbReference>
<dbReference type="Pfam" id="PF14579">
    <property type="entry name" value="HHH_6"/>
    <property type="match status" value="1"/>
</dbReference>
<dbReference type="Pfam" id="PF02811">
    <property type="entry name" value="PHP"/>
    <property type="match status" value="1"/>
</dbReference>
<dbReference type="Pfam" id="PF01336">
    <property type="entry name" value="tRNA_anti-codon"/>
    <property type="match status" value="1"/>
</dbReference>
<dbReference type="SMART" id="SM00481">
    <property type="entry name" value="POLIIIAc"/>
    <property type="match status" value="1"/>
</dbReference>
<dbReference type="SUPFAM" id="SSF89550">
    <property type="entry name" value="PHP domain-like"/>
    <property type="match status" value="1"/>
</dbReference>
<sequence length="1093" mass="118223">MGWFNGPPSWAEMERVLDSKPRRAGESAAPEPDGPLSRGRATYRPPDEGRAARSSVPYAELHAHSAFSFLDGASTPEEMVEEAARLDLRALALTDHDGLYGAVRFAEAAAELDVRTVFGAELSLGPSARTEAPDPPGPHLLVLARGPEGYRRLSRQLAAAHLAGGEKGKPRYDLDALTEAAGGHWHILTGCRKGHVRQALSDGGPDAAARALADLVDRFGAARVSIELTRHGQPLDDERNAALAALAPRFGVGVVATTGAHFAGPSRRRLAMAMGAIRARESLDSAAGWLAPLGGSHLRSGAEMARLFAWRPQAVTAAAELGEQCAFGLALIAPRLPPFDVPDGHTEDSWLRQLTMTGARDRYGSPEHAPRAYAQIEHELKVIAQLQFPGYFLVVHDIARFCRENNILCQGRGSAANSAVCYALGVTAVDPVANELLFERFLSPARDGPPDIDMDIESDQREKVIQYVYDRYGRDYAAQVANVITYRGKIAVRDMARALGYSQGQQDAWSKQISSWSGPADSPDVEGIPPQVIDLANQVRNLPRHLGIHSGGMVICDRPIADVCPVEWARMENRSVLQWDKDDCAAIGLVKFDLLGLGMLSALHYAIDLVAEHKGIEVDLARLDLSEPAVYEMLARADSVGVFQVESRAQMATLPRLKPRVFYDLVVEVALIRPGPIQGGSVHPYIRRRNGVDPVLYDHPSMEPALRKTLGVPLFQEQLMQLAVDCAGFSAAEADQLRRAMGSKRSTERMRRLRSRFYDGMRALHGAPDEVIDRTYEKLEAFANFGFPESHALSFASLVFYSSWFKLHHPAAFCAALLRAQPMGFYSPQSLVADARRHGVTVHGPDVNASLAHATLENAGTEVRLGLGAVRHIGDDLAEKLVQERKANGPFTSLLDLTARLQLSVQQTEALATAGAFGCFGMSRREALWAAGAAATQRPDRLPGVGSSSHIPALPGMSELELAAADVWATGISPDSYPTQFLRDDLDAMGVVPAARLGSVPDGDRVLIAGAVTHRQRPGTAQGVTFLNLEDETGMVNVLCTPGVWARHRKLANTAPALLVRGQVQNASGAITVVAERLGRITLAVGSRSRDFR</sequence>
<evidence type="ECO:0000255" key="1">
    <source>
        <dbReference type="HAMAP-Rule" id="MF_01902"/>
    </source>
</evidence>
<evidence type="ECO:0000256" key="2">
    <source>
        <dbReference type="SAM" id="MobiDB-lite"/>
    </source>
</evidence>
<comment type="function">
    <text evidence="1">DNA polymerase involved in damage-induced mutagenesis and translesion synthesis (TLS). It is not the major replicative DNA polymerase.</text>
</comment>
<comment type="catalytic activity">
    <reaction evidence="1">
        <text>DNA(n) + a 2'-deoxyribonucleoside 5'-triphosphate = DNA(n+1) + diphosphate</text>
        <dbReference type="Rhea" id="RHEA:22508"/>
        <dbReference type="Rhea" id="RHEA-COMP:17339"/>
        <dbReference type="Rhea" id="RHEA-COMP:17340"/>
        <dbReference type="ChEBI" id="CHEBI:33019"/>
        <dbReference type="ChEBI" id="CHEBI:61560"/>
        <dbReference type="ChEBI" id="CHEBI:173112"/>
        <dbReference type="EC" id="2.7.7.7"/>
    </reaction>
</comment>
<comment type="subcellular location">
    <subcellularLocation>
        <location evidence="1">Cytoplasm</location>
    </subcellularLocation>
</comment>
<comment type="similarity">
    <text evidence="1">Belongs to the DNA polymerase type-C family. DnaE2 subfamily.</text>
</comment>
<keyword id="KW-0963">Cytoplasm</keyword>
<keyword id="KW-0227">DNA damage</keyword>
<keyword id="KW-0234">DNA repair</keyword>
<keyword id="KW-0235">DNA replication</keyword>
<keyword id="KW-0239">DNA-directed DNA polymerase</keyword>
<keyword id="KW-0548">Nucleotidyltransferase</keyword>
<keyword id="KW-1185">Reference proteome</keyword>
<keyword id="KW-0808">Transferase</keyword>
<accession>Q73U92</accession>
<name>DNAE2_MYCPA</name>
<reference key="1">
    <citation type="journal article" date="2005" name="Proc. Natl. Acad. Sci. U.S.A.">
        <title>The complete genome sequence of Mycobacterium avium subspecies paratuberculosis.</title>
        <authorList>
            <person name="Li L."/>
            <person name="Bannantine J.P."/>
            <person name="Zhang Q."/>
            <person name="Amonsin A."/>
            <person name="May B.J."/>
            <person name="Alt D."/>
            <person name="Banerji N."/>
            <person name="Kanjilal S."/>
            <person name="Kapur V."/>
        </authorList>
    </citation>
    <scope>NUCLEOTIDE SEQUENCE [LARGE SCALE GENOMIC DNA]</scope>
    <source>
        <strain>ATCC BAA-968 / K-10</strain>
    </source>
</reference>
<feature type="chain" id="PRO_0000103384" description="Error-prone DNA polymerase">
    <location>
        <begin position="1"/>
        <end position="1093"/>
    </location>
</feature>
<feature type="region of interest" description="Disordered" evidence="2">
    <location>
        <begin position="1"/>
        <end position="55"/>
    </location>
</feature>
<feature type="compositionally biased region" description="Basic and acidic residues" evidence="2">
    <location>
        <begin position="12"/>
        <end position="25"/>
    </location>
</feature>
<organism>
    <name type="scientific">Mycolicibacterium paratuberculosis (strain ATCC BAA-968 / K-10)</name>
    <name type="common">Mycobacterium paratuberculosis</name>
    <dbReference type="NCBI Taxonomy" id="262316"/>
    <lineage>
        <taxon>Bacteria</taxon>
        <taxon>Bacillati</taxon>
        <taxon>Actinomycetota</taxon>
        <taxon>Actinomycetes</taxon>
        <taxon>Mycobacteriales</taxon>
        <taxon>Mycobacteriaceae</taxon>
        <taxon>Mycobacterium</taxon>
        <taxon>Mycobacterium avium complex (MAC)</taxon>
    </lineage>
</organism>